<comment type="function">
    <text evidence="1">Functions in the N-end rule pathway of protein degradation where it conjugates Leu, Phe and, less efficiently, Met from aminoacyl-tRNAs to the N-termini of proteins containing an N-terminal arginine or lysine.</text>
</comment>
<comment type="catalytic activity">
    <reaction evidence="1">
        <text>N-terminal L-lysyl-[protein] + L-leucyl-tRNA(Leu) = N-terminal L-leucyl-L-lysyl-[protein] + tRNA(Leu) + H(+)</text>
        <dbReference type="Rhea" id="RHEA:12340"/>
        <dbReference type="Rhea" id="RHEA-COMP:9613"/>
        <dbReference type="Rhea" id="RHEA-COMP:9622"/>
        <dbReference type="Rhea" id="RHEA-COMP:12670"/>
        <dbReference type="Rhea" id="RHEA-COMP:12671"/>
        <dbReference type="ChEBI" id="CHEBI:15378"/>
        <dbReference type="ChEBI" id="CHEBI:65249"/>
        <dbReference type="ChEBI" id="CHEBI:78442"/>
        <dbReference type="ChEBI" id="CHEBI:78494"/>
        <dbReference type="ChEBI" id="CHEBI:133043"/>
        <dbReference type="EC" id="2.3.2.6"/>
    </reaction>
</comment>
<comment type="catalytic activity">
    <reaction evidence="1">
        <text>N-terminal L-arginyl-[protein] + L-leucyl-tRNA(Leu) = N-terminal L-leucyl-L-arginyl-[protein] + tRNA(Leu) + H(+)</text>
        <dbReference type="Rhea" id="RHEA:50416"/>
        <dbReference type="Rhea" id="RHEA-COMP:9613"/>
        <dbReference type="Rhea" id="RHEA-COMP:9622"/>
        <dbReference type="Rhea" id="RHEA-COMP:12672"/>
        <dbReference type="Rhea" id="RHEA-COMP:12673"/>
        <dbReference type="ChEBI" id="CHEBI:15378"/>
        <dbReference type="ChEBI" id="CHEBI:64719"/>
        <dbReference type="ChEBI" id="CHEBI:78442"/>
        <dbReference type="ChEBI" id="CHEBI:78494"/>
        <dbReference type="ChEBI" id="CHEBI:133044"/>
        <dbReference type="EC" id="2.3.2.6"/>
    </reaction>
</comment>
<comment type="catalytic activity">
    <reaction evidence="1">
        <text>L-phenylalanyl-tRNA(Phe) + an N-terminal L-alpha-aminoacyl-[protein] = an N-terminal L-phenylalanyl-L-alpha-aminoacyl-[protein] + tRNA(Phe)</text>
        <dbReference type="Rhea" id="RHEA:43632"/>
        <dbReference type="Rhea" id="RHEA-COMP:9668"/>
        <dbReference type="Rhea" id="RHEA-COMP:9699"/>
        <dbReference type="Rhea" id="RHEA-COMP:10636"/>
        <dbReference type="Rhea" id="RHEA-COMP:10637"/>
        <dbReference type="ChEBI" id="CHEBI:78442"/>
        <dbReference type="ChEBI" id="CHEBI:78531"/>
        <dbReference type="ChEBI" id="CHEBI:78597"/>
        <dbReference type="ChEBI" id="CHEBI:83561"/>
        <dbReference type="EC" id="2.3.2.6"/>
    </reaction>
</comment>
<comment type="subcellular location">
    <subcellularLocation>
        <location evidence="1">Cytoplasm</location>
    </subcellularLocation>
</comment>
<comment type="similarity">
    <text evidence="1">Belongs to the L/F-transferase family.</text>
</comment>
<protein>
    <recommendedName>
        <fullName evidence="1">Leucyl/phenylalanyl-tRNA--protein transferase</fullName>
        <ecNumber evidence="1">2.3.2.6</ecNumber>
    </recommendedName>
    <alternativeName>
        <fullName evidence="1">L/F-transferase</fullName>
    </alternativeName>
    <alternativeName>
        <fullName evidence="1">Leucyltransferase</fullName>
    </alternativeName>
    <alternativeName>
        <fullName evidence="1">Phenyalanyltransferase</fullName>
    </alternativeName>
</protein>
<keyword id="KW-0012">Acyltransferase</keyword>
<keyword id="KW-0963">Cytoplasm</keyword>
<keyword id="KW-1185">Reference proteome</keyword>
<keyword id="KW-0808">Transferase</keyword>
<dbReference type="EC" id="2.3.2.6" evidence="1"/>
<dbReference type="EMBL" id="CP000252">
    <property type="protein sequence ID" value="ABC76053.1"/>
    <property type="molecule type" value="Genomic_DNA"/>
</dbReference>
<dbReference type="RefSeq" id="WP_011416088.1">
    <property type="nucleotide sequence ID" value="NC_007759.1"/>
</dbReference>
<dbReference type="SMR" id="Q2LQL0"/>
<dbReference type="FunCoup" id="Q2LQL0">
    <property type="interactions" value="235"/>
</dbReference>
<dbReference type="STRING" id="56780.SYN_02379"/>
<dbReference type="KEGG" id="sat:SYN_02379"/>
<dbReference type="eggNOG" id="COG2360">
    <property type="taxonomic scope" value="Bacteria"/>
</dbReference>
<dbReference type="HOGENOM" id="CLU_075045_0_0_7"/>
<dbReference type="InParanoid" id="Q2LQL0"/>
<dbReference type="OrthoDB" id="9790282at2"/>
<dbReference type="Proteomes" id="UP000001933">
    <property type="component" value="Chromosome"/>
</dbReference>
<dbReference type="GO" id="GO:0005737">
    <property type="term" value="C:cytoplasm"/>
    <property type="evidence" value="ECO:0007669"/>
    <property type="project" value="UniProtKB-SubCell"/>
</dbReference>
<dbReference type="GO" id="GO:0008914">
    <property type="term" value="F:leucyl-tRNA--protein transferase activity"/>
    <property type="evidence" value="ECO:0007669"/>
    <property type="project" value="UniProtKB-UniRule"/>
</dbReference>
<dbReference type="GO" id="GO:0030163">
    <property type="term" value="P:protein catabolic process"/>
    <property type="evidence" value="ECO:0007669"/>
    <property type="project" value="UniProtKB-UniRule"/>
</dbReference>
<dbReference type="FunFam" id="3.30.70.3550:FF:000001">
    <property type="entry name" value="Leucyl/phenylalanyl-tRNA--protein transferase"/>
    <property type="match status" value="1"/>
</dbReference>
<dbReference type="FunFam" id="3.40.630.70:FF:000001">
    <property type="entry name" value="Leucyl/phenylalanyl-tRNA--protein transferase"/>
    <property type="match status" value="1"/>
</dbReference>
<dbReference type="Gene3D" id="3.40.630.70">
    <property type="entry name" value="Leucyl/phenylalanyl-tRNA-protein transferase, C-terminal domain"/>
    <property type="match status" value="1"/>
</dbReference>
<dbReference type="Gene3D" id="3.30.70.3550">
    <property type="entry name" value="Leucyl/phenylalanyl-tRNA-protein transferase, N-terminal domain"/>
    <property type="match status" value="1"/>
</dbReference>
<dbReference type="HAMAP" id="MF_00688">
    <property type="entry name" value="Leu_Phe_trans"/>
    <property type="match status" value="1"/>
</dbReference>
<dbReference type="InterPro" id="IPR016181">
    <property type="entry name" value="Acyl_CoA_acyltransferase"/>
</dbReference>
<dbReference type="InterPro" id="IPR004616">
    <property type="entry name" value="Leu/Phe-tRNA_Trfase"/>
</dbReference>
<dbReference type="InterPro" id="IPR042203">
    <property type="entry name" value="Leu/Phe-tRNA_Trfase_C"/>
</dbReference>
<dbReference type="InterPro" id="IPR042221">
    <property type="entry name" value="Leu/Phe-tRNA_Trfase_N"/>
</dbReference>
<dbReference type="NCBIfam" id="TIGR00667">
    <property type="entry name" value="aat"/>
    <property type="match status" value="1"/>
</dbReference>
<dbReference type="PANTHER" id="PTHR30098">
    <property type="entry name" value="LEUCYL/PHENYLALANYL-TRNA--PROTEIN TRANSFERASE"/>
    <property type="match status" value="1"/>
</dbReference>
<dbReference type="PANTHER" id="PTHR30098:SF2">
    <property type="entry name" value="LEUCYL_PHENYLALANYL-TRNA--PROTEIN TRANSFERASE"/>
    <property type="match status" value="1"/>
</dbReference>
<dbReference type="Pfam" id="PF03588">
    <property type="entry name" value="Leu_Phe_trans"/>
    <property type="match status" value="1"/>
</dbReference>
<dbReference type="SUPFAM" id="SSF55729">
    <property type="entry name" value="Acyl-CoA N-acyltransferases (Nat)"/>
    <property type="match status" value="1"/>
</dbReference>
<organism>
    <name type="scientific">Syntrophus aciditrophicus (strain SB)</name>
    <dbReference type="NCBI Taxonomy" id="56780"/>
    <lineage>
        <taxon>Bacteria</taxon>
        <taxon>Pseudomonadati</taxon>
        <taxon>Thermodesulfobacteriota</taxon>
        <taxon>Syntrophia</taxon>
        <taxon>Syntrophales</taxon>
        <taxon>Syntrophaceae</taxon>
        <taxon>Syntrophus</taxon>
    </lineage>
</organism>
<reference key="1">
    <citation type="journal article" date="2007" name="Proc. Natl. Acad. Sci. U.S.A.">
        <title>The genome of Syntrophus aciditrophicus: life at the thermodynamic limit of microbial growth.</title>
        <authorList>
            <person name="McInerney M.J."/>
            <person name="Rohlin L."/>
            <person name="Mouttaki H."/>
            <person name="Kim U."/>
            <person name="Krupp R.S."/>
            <person name="Rios-Hernandez L."/>
            <person name="Sieber J."/>
            <person name="Struchtemeyer C.G."/>
            <person name="Bhattacharyya A."/>
            <person name="Campbell J.W."/>
            <person name="Gunsalus R.P."/>
        </authorList>
    </citation>
    <scope>NUCLEOTIDE SEQUENCE [LARGE SCALE GENOMIC DNA]</scope>
    <source>
        <strain>SB</strain>
    </source>
</reference>
<proteinExistence type="inferred from homology"/>
<name>LFTR_SYNAS</name>
<accession>Q2LQL0</accession>
<gene>
    <name evidence="1" type="primary">aat</name>
    <name type="ordered locus">SYNAS_01740</name>
    <name type="ORF">SYN_02379</name>
</gene>
<feature type="chain" id="PRO_0000258105" description="Leucyl/phenylalanyl-tRNA--protein transferase">
    <location>
        <begin position="1"/>
        <end position="239"/>
    </location>
</feature>
<evidence type="ECO:0000255" key="1">
    <source>
        <dbReference type="HAMAP-Rule" id="MF_00688"/>
    </source>
</evidence>
<sequence>MPICPLGKVIVFPPVSLAMEDGLLAVGGDLSPYRLLEAYRQGIFPWYSPGEPILWWAPQPRFVLFPDEILLSRSMRQILRKKHFQVTLDRNFDAVIHACATIGRPAQEGTWITEEMQEAYSILHELGYAHSVEVWRDRGLIGGLYGVSLGGCFFGESMFSRESNASKAALIFLSSLLKILRFTLIDCQVYTSHLALLGARFIPRETFTALIRKSLRRPTLRGNWSTHPETADKLPGHEF</sequence>